<proteinExistence type="inferred from homology"/>
<accession>B1VFG2</accession>
<name>RL33_CORU7</name>
<feature type="chain" id="PRO_1000115125" description="Large ribosomal subunit protein bL33">
    <location>
        <begin position="1"/>
        <end position="54"/>
    </location>
</feature>
<dbReference type="EMBL" id="AM942444">
    <property type="protein sequence ID" value="CAQ04501.1"/>
    <property type="molecule type" value="Genomic_DNA"/>
</dbReference>
<dbReference type="RefSeq" id="WP_012359793.1">
    <property type="nucleotide sequence ID" value="NC_010545.1"/>
</dbReference>
<dbReference type="SMR" id="B1VFG2"/>
<dbReference type="STRING" id="504474.cu0541"/>
<dbReference type="GeneID" id="89362138"/>
<dbReference type="KEGG" id="cur:cu0541"/>
<dbReference type="eggNOG" id="COG0267">
    <property type="taxonomic scope" value="Bacteria"/>
</dbReference>
<dbReference type="HOGENOM" id="CLU_190949_1_1_11"/>
<dbReference type="Proteomes" id="UP000001727">
    <property type="component" value="Chromosome"/>
</dbReference>
<dbReference type="GO" id="GO:0022625">
    <property type="term" value="C:cytosolic large ribosomal subunit"/>
    <property type="evidence" value="ECO:0007669"/>
    <property type="project" value="TreeGrafter"/>
</dbReference>
<dbReference type="GO" id="GO:0003735">
    <property type="term" value="F:structural constituent of ribosome"/>
    <property type="evidence" value="ECO:0007669"/>
    <property type="project" value="InterPro"/>
</dbReference>
<dbReference type="GO" id="GO:0006412">
    <property type="term" value="P:translation"/>
    <property type="evidence" value="ECO:0007669"/>
    <property type="project" value="UniProtKB-UniRule"/>
</dbReference>
<dbReference type="FunFam" id="2.20.28.120:FF:000002">
    <property type="entry name" value="50S ribosomal protein L33"/>
    <property type="match status" value="1"/>
</dbReference>
<dbReference type="Gene3D" id="2.20.28.120">
    <property type="entry name" value="Ribosomal protein L33"/>
    <property type="match status" value="1"/>
</dbReference>
<dbReference type="HAMAP" id="MF_00294">
    <property type="entry name" value="Ribosomal_bL33"/>
    <property type="match status" value="1"/>
</dbReference>
<dbReference type="InterPro" id="IPR001705">
    <property type="entry name" value="Ribosomal_bL33"/>
</dbReference>
<dbReference type="InterPro" id="IPR018264">
    <property type="entry name" value="Ribosomal_bL33_CS"/>
</dbReference>
<dbReference type="InterPro" id="IPR038584">
    <property type="entry name" value="Ribosomal_bL33_sf"/>
</dbReference>
<dbReference type="InterPro" id="IPR011332">
    <property type="entry name" value="Ribosomal_zn-bd"/>
</dbReference>
<dbReference type="NCBIfam" id="NF001860">
    <property type="entry name" value="PRK00595.1"/>
    <property type="match status" value="1"/>
</dbReference>
<dbReference type="NCBIfam" id="TIGR01023">
    <property type="entry name" value="rpmG_bact"/>
    <property type="match status" value="1"/>
</dbReference>
<dbReference type="PANTHER" id="PTHR15238">
    <property type="entry name" value="54S RIBOSOMAL PROTEIN L39, MITOCHONDRIAL"/>
    <property type="match status" value="1"/>
</dbReference>
<dbReference type="PANTHER" id="PTHR15238:SF1">
    <property type="entry name" value="LARGE RIBOSOMAL SUBUNIT PROTEIN BL33M"/>
    <property type="match status" value="1"/>
</dbReference>
<dbReference type="Pfam" id="PF00471">
    <property type="entry name" value="Ribosomal_L33"/>
    <property type="match status" value="1"/>
</dbReference>
<dbReference type="SUPFAM" id="SSF57829">
    <property type="entry name" value="Zn-binding ribosomal proteins"/>
    <property type="match status" value="1"/>
</dbReference>
<dbReference type="PROSITE" id="PS00582">
    <property type="entry name" value="RIBOSOMAL_L33"/>
    <property type="match status" value="1"/>
</dbReference>
<gene>
    <name evidence="1" type="primary">rpmG</name>
    <name type="ordered locus">cu0541</name>
</gene>
<evidence type="ECO:0000255" key="1">
    <source>
        <dbReference type="HAMAP-Rule" id="MF_00294"/>
    </source>
</evidence>
<evidence type="ECO:0000305" key="2"/>
<protein>
    <recommendedName>
        <fullName evidence="1">Large ribosomal subunit protein bL33</fullName>
    </recommendedName>
    <alternativeName>
        <fullName evidence="2">50S ribosomal protein L33</fullName>
    </alternativeName>
</protein>
<comment type="similarity">
    <text evidence="1">Belongs to the bacterial ribosomal protein bL33 family.</text>
</comment>
<organism>
    <name type="scientific">Corynebacterium urealyticum (strain ATCC 43042 / DSM 7109)</name>
    <dbReference type="NCBI Taxonomy" id="504474"/>
    <lineage>
        <taxon>Bacteria</taxon>
        <taxon>Bacillati</taxon>
        <taxon>Actinomycetota</taxon>
        <taxon>Actinomycetes</taxon>
        <taxon>Mycobacteriales</taxon>
        <taxon>Corynebacteriaceae</taxon>
        <taxon>Corynebacterium</taxon>
    </lineage>
</organism>
<reference key="1">
    <citation type="journal article" date="2008" name="J. Biotechnol.">
        <title>The lifestyle of Corynebacterium urealyticum derived from its complete genome sequence established by pyrosequencing.</title>
        <authorList>
            <person name="Tauch A."/>
            <person name="Trost E."/>
            <person name="Tilker A."/>
            <person name="Ludewig U."/>
            <person name="Schneiker S."/>
            <person name="Goesmann A."/>
            <person name="Arnold W."/>
            <person name="Bekel T."/>
            <person name="Brinkrolf K."/>
            <person name="Brune I."/>
            <person name="Goetker S."/>
            <person name="Kalinowski J."/>
            <person name="Kamp P.-B."/>
            <person name="Lobo F.P."/>
            <person name="Viehoever P."/>
            <person name="Weisshaar B."/>
            <person name="Soriano F."/>
            <person name="Droege M."/>
            <person name="Puehler A."/>
        </authorList>
    </citation>
    <scope>NUCLEOTIDE SEQUENCE [LARGE SCALE GENOMIC DNA]</scope>
    <source>
        <strain>ATCC 43042 / DSM 7109</strain>
    </source>
</reference>
<keyword id="KW-1185">Reference proteome</keyword>
<keyword id="KW-0687">Ribonucleoprotein</keyword>
<keyword id="KW-0689">Ribosomal protein</keyword>
<sequence>MARNDIRPIIKLKSTAGTGYTYVTRKNKRNNPDRITLKKYDPVARKHVEFREER</sequence>